<feature type="chain" id="PRO_1000022181" description="Valine--tRNA ligase">
    <location>
        <begin position="1"/>
        <end position="854"/>
    </location>
</feature>
<feature type="short sequence motif" description="'HIGH' region">
    <location>
        <begin position="46"/>
        <end position="56"/>
    </location>
</feature>
<feature type="short sequence motif" description="'KMSKS' region">
    <location>
        <begin position="551"/>
        <end position="555"/>
    </location>
</feature>
<feature type="binding site" evidence="1">
    <location>
        <position position="554"/>
    </location>
    <ligand>
        <name>ATP</name>
        <dbReference type="ChEBI" id="CHEBI:30616"/>
    </ligand>
</feature>
<accession>A5CCE0</accession>
<organism>
    <name type="scientific">Orientia tsutsugamushi (strain Boryong)</name>
    <name type="common">Rickettsia tsutsugamushi</name>
    <dbReference type="NCBI Taxonomy" id="357244"/>
    <lineage>
        <taxon>Bacteria</taxon>
        <taxon>Pseudomonadati</taxon>
        <taxon>Pseudomonadota</taxon>
        <taxon>Alphaproteobacteria</taxon>
        <taxon>Rickettsiales</taxon>
        <taxon>Rickettsiaceae</taxon>
        <taxon>Rickettsieae</taxon>
        <taxon>Orientia</taxon>
    </lineage>
</organism>
<dbReference type="EC" id="6.1.1.9" evidence="1"/>
<dbReference type="EMBL" id="AM494475">
    <property type="protein sequence ID" value="CAM79339.1"/>
    <property type="molecule type" value="Genomic_DNA"/>
</dbReference>
<dbReference type="RefSeq" id="WP_011944374.1">
    <property type="nucleotide sequence ID" value="NC_009488.1"/>
</dbReference>
<dbReference type="SMR" id="A5CCE0"/>
<dbReference type="KEGG" id="ots:OTBS_0273"/>
<dbReference type="eggNOG" id="COG0525">
    <property type="taxonomic scope" value="Bacteria"/>
</dbReference>
<dbReference type="HOGENOM" id="CLU_001493_0_2_5"/>
<dbReference type="Proteomes" id="UP000001565">
    <property type="component" value="Chromosome"/>
</dbReference>
<dbReference type="GO" id="GO:0005829">
    <property type="term" value="C:cytosol"/>
    <property type="evidence" value="ECO:0007669"/>
    <property type="project" value="TreeGrafter"/>
</dbReference>
<dbReference type="GO" id="GO:0002161">
    <property type="term" value="F:aminoacyl-tRNA deacylase activity"/>
    <property type="evidence" value="ECO:0007669"/>
    <property type="project" value="InterPro"/>
</dbReference>
<dbReference type="GO" id="GO:0005524">
    <property type="term" value="F:ATP binding"/>
    <property type="evidence" value="ECO:0007669"/>
    <property type="project" value="UniProtKB-UniRule"/>
</dbReference>
<dbReference type="GO" id="GO:0004832">
    <property type="term" value="F:valine-tRNA ligase activity"/>
    <property type="evidence" value="ECO:0007669"/>
    <property type="project" value="UniProtKB-UniRule"/>
</dbReference>
<dbReference type="GO" id="GO:0006438">
    <property type="term" value="P:valyl-tRNA aminoacylation"/>
    <property type="evidence" value="ECO:0007669"/>
    <property type="project" value="UniProtKB-UniRule"/>
</dbReference>
<dbReference type="CDD" id="cd07962">
    <property type="entry name" value="Anticodon_Ia_Val"/>
    <property type="match status" value="1"/>
</dbReference>
<dbReference type="FunFam" id="3.40.50.620:FF:000192">
    <property type="entry name" value="Valine--tRNA ligase"/>
    <property type="match status" value="1"/>
</dbReference>
<dbReference type="Gene3D" id="3.40.50.620">
    <property type="entry name" value="HUPs"/>
    <property type="match status" value="2"/>
</dbReference>
<dbReference type="Gene3D" id="1.10.730.10">
    <property type="entry name" value="Isoleucyl-tRNA Synthetase, Domain 1"/>
    <property type="match status" value="1"/>
</dbReference>
<dbReference type="HAMAP" id="MF_02005">
    <property type="entry name" value="Val_tRNA_synth_type2"/>
    <property type="match status" value="1"/>
</dbReference>
<dbReference type="InterPro" id="IPR001412">
    <property type="entry name" value="aa-tRNA-synth_I_CS"/>
</dbReference>
<dbReference type="InterPro" id="IPR002300">
    <property type="entry name" value="aa-tRNA-synth_Ia"/>
</dbReference>
<dbReference type="InterPro" id="IPR033705">
    <property type="entry name" value="Anticodon_Ia_Val"/>
</dbReference>
<dbReference type="InterPro" id="IPR013155">
    <property type="entry name" value="M/V/L/I-tRNA-synth_anticd-bd"/>
</dbReference>
<dbReference type="InterPro" id="IPR014729">
    <property type="entry name" value="Rossmann-like_a/b/a_fold"/>
</dbReference>
<dbReference type="InterPro" id="IPR009080">
    <property type="entry name" value="tRNAsynth_Ia_anticodon-bd"/>
</dbReference>
<dbReference type="InterPro" id="IPR009008">
    <property type="entry name" value="Val/Leu/Ile-tRNA-synth_edit"/>
</dbReference>
<dbReference type="InterPro" id="IPR022874">
    <property type="entry name" value="Valine-tRNA_ligase_type_2"/>
</dbReference>
<dbReference type="InterPro" id="IPR002303">
    <property type="entry name" value="Valyl-tRNA_ligase"/>
</dbReference>
<dbReference type="NCBIfam" id="NF009687">
    <property type="entry name" value="PRK13208.1"/>
    <property type="match status" value="1"/>
</dbReference>
<dbReference type="NCBIfam" id="TIGR00422">
    <property type="entry name" value="valS"/>
    <property type="match status" value="1"/>
</dbReference>
<dbReference type="PANTHER" id="PTHR11946:SF93">
    <property type="entry name" value="VALINE--TRNA LIGASE, CHLOROPLASTIC_MITOCHONDRIAL 2"/>
    <property type="match status" value="1"/>
</dbReference>
<dbReference type="PANTHER" id="PTHR11946">
    <property type="entry name" value="VALYL-TRNA SYNTHETASES"/>
    <property type="match status" value="1"/>
</dbReference>
<dbReference type="Pfam" id="PF08264">
    <property type="entry name" value="Anticodon_1"/>
    <property type="match status" value="1"/>
</dbReference>
<dbReference type="Pfam" id="PF00133">
    <property type="entry name" value="tRNA-synt_1"/>
    <property type="match status" value="1"/>
</dbReference>
<dbReference type="PRINTS" id="PR00986">
    <property type="entry name" value="TRNASYNTHVAL"/>
</dbReference>
<dbReference type="SUPFAM" id="SSF47323">
    <property type="entry name" value="Anticodon-binding domain of a subclass of class I aminoacyl-tRNA synthetases"/>
    <property type="match status" value="1"/>
</dbReference>
<dbReference type="SUPFAM" id="SSF52374">
    <property type="entry name" value="Nucleotidylyl transferase"/>
    <property type="match status" value="1"/>
</dbReference>
<dbReference type="SUPFAM" id="SSF50677">
    <property type="entry name" value="ValRS/IleRS/LeuRS editing domain"/>
    <property type="match status" value="1"/>
</dbReference>
<dbReference type="PROSITE" id="PS00178">
    <property type="entry name" value="AA_TRNA_LIGASE_I"/>
    <property type="match status" value="1"/>
</dbReference>
<keyword id="KW-0030">Aminoacyl-tRNA synthetase</keyword>
<keyword id="KW-0067">ATP-binding</keyword>
<keyword id="KW-0963">Cytoplasm</keyword>
<keyword id="KW-0436">Ligase</keyword>
<keyword id="KW-0547">Nucleotide-binding</keyword>
<keyword id="KW-0648">Protein biosynthesis</keyword>
<keyword id="KW-1185">Reference proteome</keyword>
<sequence>MAELSANYNYLENEPKWQDDWQKKNIYQWNSTLPKDKTFIVDPPPPTVSGDLHIGHAMSFIQLDCIVRYQRMLGKNIFFPIGFDDNGLPTERFVEKIKNVRASNIARPDFIKMCQEVVIAKEGEFCKFLNAIGLSVDWSLKYQTISSLSCKISQMSFLDLVNKNQVYRNHQPVLWDCIDQTALSQADVEDKERITSMYYIAFAVMNSELKVQIATTRPEMLPACCAIFFNPNDIRYQHLHNQFAITPLFKSVVPILAEETVDINKGSGLVMCCTFGDTKDVAWWRKHNLPTRIIIDYYGKVKPLDFTVSSQNQEKFTEYYNQITGLKIAQARNKVVELLHHNQLIIKQEQISQTVKQAERSGAILEIIMAPQWFIKVVEHKDALLQKSQELEWYPKSMKIKLDNWINSLAWDWCISRQRYFGIPFPVWYSKREGEEGKIIFADISQLPVDPLYDLPAGYSKDEVIPDSDVMDTWATSSLSPQLSSHGISSNLTIDSTRHNQLFPADLRSQAHEIIRTWTFYTIVKSYLHQNSLPWSKIMISGWCLADDRKKMSKSKGNIILPTELIKRYGADAVRYWALTSQLGHDCVVSEQVIGIGKKLVNKLWNAARFILQHITGKLTAEFLISAKHCVEKKVISCTTDLWMLSKLQDTVNNTSNLLNNYEYASARLYVEEFFLKDFCDNYLELVKSRIYDHSSEYQKSAIYSVFWGLKTILELFAPFVPFITEELYAAIYQSNNLCNGSIHSSNKWPLAQNFYNDELILTTGNLAINILTLVRKSKSARKLSVKAPISLLQVKYDSDSYQQLPSDLVDDLKLVTNSNEFSIVTNFTTIDDLITGDGITVNIVYPGSMKHEC</sequence>
<evidence type="ECO:0000255" key="1">
    <source>
        <dbReference type="HAMAP-Rule" id="MF_02005"/>
    </source>
</evidence>
<comment type="function">
    <text evidence="1">Catalyzes the attachment of valine to tRNA(Val). As ValRS can inadvertently accommodate and process structurally similar amino acids such as threonine, to avoid such errors, it has a 'posttransfer' editing activity that hydrolyzes mischarged Thr-tRNA(Val) in a tRNA-dependent manner.</text>
</comment>
<comment type="catalytic activity">
    <reaction evidence="1">
        <text>tRNA(Val) + L-valine + ATP = L-valyl-tRNA(Val) + AMP + diphosphate</text>
        <dbReference type="Rhea" id="RHEA:10704"/>
        <dbReference type="Rhea" id="RHEA-COMP:9672"/>
        <dbReference type="Rhea" id="RHEA-COMP:9708"/>
        <dbReference type="ChEBI" id="CHEBI:30616"/>
        <dbReference type="ChEBI" id="CHEBI:33019"/>
        <dbReference type="ChEBI" id="CHEBI:57762"/>
        <dbReference type="ChEBI" id="CHEBI:78442"/>
        <dbReference type="ChEBI" id="CHEBI:78537"/>
        <dbReference type="ChEBI" id="CHEBI:456215"/>
        <dbReference type="EC" id="6.1.1.9"/>
    </reaction>
</comment>
<comment type="subunit">
    <text evidence="1">Monomer.</text>
</comment>
<comment type="subcellular location">
    <subcellularLocation>
        <location evidence="1">Cytoplasm</location>
    </subcellularLocation>
</comment>
<comment type="domain">
    <text evidence="1">ValRS has two distinct active sites: one for aminoacylation and one for editing. The misactivated threonine is translocated from the active site to the editing site.</text>
</comment>
<comment type="similarity">
    <text evidence="1">Belongs to the class-I aminoacyl-tRNA synthetase family. ValS type 2 subfamily.</text>
</comment>
<protein>
    <recommendedName>
        <fullName evidence="1">Valine--tRNA ligase</fullName>
        <ecNumber evidence="1">6.1.1.9</ecNumber>
    </recommendedName>
    <alternativeName>
        <fullName evidence="1">Valyl-tRNA synthetase</fullName>
        <shortName evidence="1">ValRS</shortName>
    </alternativeName>
</protein>
<name>SYV_ORITB</name>
<proteinExistence type="inferred from homology"/>
<reference key="1">
    <citation type="journal article" date="2007" name="Proc. Natl. Acad. Sci. U.S.A.">
        <title>The Orientia tsutsugamushi genome reveals massive proliferation of conjugative type IV secretion system and host-cell interaction genes.</title>
        <authorList>
            <person name="Cho N.-H."/>
            <person name="Kim H.-R."/>
            <person name="Lee J.-H."/>
            <person name="Kim S.-Y."/>
            <person name="Kim J."/>
            <person name="Cha S."/>
            <person name="Kim S.-Y."/>
            <person name="Darby A.C."/>
            <person name="Fuxelius H.-H."/>
            <person name="Yin J."/>
            <person name="Kim J.H."/>
            <person name="Kim J."/>
            <person name="Lee S.J."/>
            <person name="Koh Y.-S."/>
            <person name="Jang W.-J."/>
            <person name="Park K.-H."/>
            <person name="Andersson S.G.E."/>
            <person name="Choi M.-S."/>
            <person name="Kim I.-S."/>
        </authorList>
    </citation>
    <scope>NUCLEOTIDE SEQUENCE [LARGE SCALE GENOMIC DNA]</scope>
    <source>
        <strain>Boryong</strain>
    </source>
</reference>
<gene>
    <name evidence="1" type="primary">valS</name>
    <name type="ordered locus">OTBS_0273</name>
</gene>